<sequence>MLNRSIHEITLPLKVIIGSNILDKIPDYLLKMKLTNQYKAGIITGPTTYNVAGKIVEEAMKNNGYIVEVWKARDARIETANQIVEETKKHGIKIFLGVGGGKSIDLAKYAAYKNNGYMISVPTAASHDGIASPFASLKGTSKPTSTPTTTPYAIIADIDMISKAPPRLIRSGVGDLLGKLTAVKDWQLAHRLKGEYYGEYAAQLALLSAKHVIRYHELIASGNPDGIRIVVEALISSGVAMCIAGSSRPASGSEHLFSHALDLLAPGKALHGEQVALGTIMMLYLYGDPKWKKIKRIMKKIGLPTTAEEIGIPIETIVKALTIAHKIRPNRYTILGEKGLTEEAAWRLVRETGII</sequence>
<keyword id="KW-0963">Cytoplasm</keyword>
<keyword id="KW-0444">Lipid biosynthesis</keyword>
<keyword id="KW-0443">Lipid metabolism</keyword>
<keyword id="KW-0479">Metal-binding</keyword>
<keyword id="KW-0520">NAD</keyword>
<keyword id="KW-0521">NADP</keyword>
<keyword id="KW-0560">Oxidoreductase</keyword>
<keyword id="KW-0594">Phospholipid biosynthesis</keyword>
<keyword id="KW-1208">Phospholipid metabolism</keyword>
<keyword id="KW-1185">Reference proteome</keyword>
<keyword id="KW-0862">Zinc</keyword>
<gene>
    <name evidence="1" type="primary">egsA</name>
    <name type="ordered locus">Smar_0939</name>
</gene>
<evidence type="ECO:0000255" key="1">
    <source>
        <dbReference type="HAMAP-Rule" id="MF_00497"/>
    </source>
</evidence>
<organism>
    <name type="scientific">Staphylothermus marinus (strain ATCC 43588 / DSM 3639 / JCM 9404 / F1)</name>
    <dbReference type="NCBI Taxonomy" id="399550"/>
    <lineage>
        <taxon>Archaea</taxon>
        <taxon>Thermoproteota</taxon>
        <taxon>Thermoprotei</taxon>
        <taxon>Desulfurococcales</taxon>
        <taxon>Desulfurococcaceae</taxon>
        <taxon>Staphylothermus</taxon>
    </lineage>
</organism>
<proteinExistence type="inferred from homology"/>
<name>G1PDH_STAMF</name>
<feature type="chain" id="PRO_0000350661" description="Glycerol-1-phosphate dehydrogenase [NAD(P)+]">
    <location>
        <begin position="1"/>
        <end position="355"/>
    </location>
</feature>
<feature type="binding site" evidence="1">
    <location>
        <begin position="101"/>
        <end position="105"/>
    </location>
    <ligand>
        <name>NAD(+)</name>
        <dbReference type="ChEBI" id="CHEBI:57540"/>
    </ligand>
</feature>
<feature type="binding site" evidence="1">
    <location>
        <begin position="123"/>
        <end position="126"/>
    </location>
    <ligand>
        <name>NAD(+)</name>
        <dbReference type="ChEBI" id="CHEBI:57540"/>
    </ligand>
</feature>
<feature type="binding site" evidence="1">
    <location>
        <position position="128"/>
    </location>
    <ligand>
        <name>substrate</name>
    </ligand>
</feature>
<feature type="binding site" evidence="1">
    <location>
        <position position="132"/>
    </location>
    <ligand>
        <name>NAD(+)</name>
        <dbReference type="ChEBI" id="CHEBI:57540"/>
    </ligand>
</feature>
<feature type="binding site" evidence="1">
    <location>
        <position position="175"/>
    </location>
    <ligand>
        <name>substrate</name>
    </ligand>
</feature>
<feature type="binding site" evidence="1">
    <location>
        <position position="175"/>
    </location>
    <ligand>
        <name>Zn(2+)</name>
        <dbReference type="ChEBI" id="CHEBI:29105"/>
        <note>catalytic</note>
    </ligand>
</feature>
<feature type="binding site" evidence="1">
    <location>
        <position position="255"/>
    </location>
    <ligand>
        <name>Zn(2+)</name>
        <dbReference type="ChEBI" id="CHEBI:29105"/>
        <note>catalytic</note>
    </ligand>
</feature>
<feature type="binding site" evidence="1">
    <location>
        <position position="259"/>
    </location>
    <ligand>
        <name>substrate</name>
    </ligand>
</feature>
<feature type="binding site" evidence="1">
    <location>
        <position position="271"/>
    </location>
    <ligand>
        <name>Zn(2+)</name>
        <dbReference type="ChEBI" id="CHEBI:29105"/>
        <note>catalytic</note>
    </ligand>
</feature>
<protein>
    <recommendedName>
        <fullName evidence="1">Glycerol-1-phosphate dehydrogenase [NAD(P)+]</fullName>
        <shortName evidence="1">G1P dehydrogenase</shortName>
        <shortName evidence="1">G1PDH</shortName>
        <ecNumber evidence="1">1.1.1.261</ecNumber>
    </recommendedName>
    <alternativeName>
        <fullName evidence="1">Enantiomeric glycerophosphate synthase</fullName>
    </alternativeName>
    <alternativeName>
        <fullName evidence="1">sn-glycerol-1-phosphate dehydrogenase</fullName>
    </alternativeName>
</protein>
<accession>A3DN28</accession>
<dbReference type="EC" id="1.1.1.261" evidence="1"/>
<dbReference type="EMBL" id="CP000575">
    <property type="protein sequence ID" value="ABN70038.1"/>
    <property type="molecule type" value="Genomic_DNA"/>
</dbReference>
<dbReference type="RefSeq" id="WP_011839229.1">
    <property type="nucleotide sequence ID" value="NC_009033.1"/>
</dbReference>
<dbReference type="SMR" id="A3DN28"/>
<dbReference type="STRING" id="399550.Smar_0939"/>
<dbReference type="GeneID" id="4907415"/>
<dbReference type="KEGG" id="smr:Smar_0939"/>
<dbReference type="eggNOG" id="arCOG00982">
    <property type="taxonomic scope" value="Archaea"/>
</dbReference>
<dbReference type="HOGENOM" id="CLU_038362_0_0_2"/>
<dbReference type="OrthoDB" id="8656at2157"/>
<dbReference type="UniPathway" id="UPA00940"/>
<dbReference type="Proteomes" id="UP000000254">
    <property type="component" value="Chromosome"/>
</dbReference>
<dbReference type="GO" id="GO:0005737">
    <property type="term" value="C:cytoplasm"/>
    <property type="evidence" value="ECO:0007669"/>
    <property type="project" value="UniProtKB-SubCell"/>
</dbReference>
<dbReference type="GO" id="GO:0106357">
    <property type="term" value="F:glycerol-1-phosphate dehydrogenase (NAD+) activity"/>
    <property type="evidence" value="ECO:0007669"/>
    <property type="project" value="RHEA"/>
</dbReference>
<dbReference type="GO" id="GO:0106358">
    <property type="term" value="F:glycerol-1-phosphate dehydrogenase (NADP+) activity"/>
    <property type="evidence" value="ECO:0007669"/>
    <property type="project" value="RHEA"/>
</dbReference>
<dbReference type="GO" id="GO:0046872">
    <property type="term" value="F:metal ion binding"/>
    <property type="evidence" value="ECO:0007669"/>
    <property type="project" value="UniProtKB-KW"/>
</dbReference>
<dbReference type="GO" id="GO:0006650">
    <property type="term" value="P:glycerophospholipid metabolic process"/>
    <property type="evidence" value="ECO:0007669"/>
    <property type="project" value="UniProtKB-UniRule"/>
</dbReference>
<dbReference type="GO" id="GO:0008654">
    <property type="term" value="P:phospholipid biosynthetic process"/>
    <property type="evidence" value="ECO:0007669"/>
    <property type="project" value="UniProtKB-KW"/>
</dbReference>
<dbReference type="CDD" id="cd08173">
    <property type="entry name" value="Gro1PDH"/>
    <property type="match status" value="1"/>
</dbReference>
<dbReference type="Gene3D" id="3.40.50.1970">
    <property type="match status" value="1"/>
</dbReference>
<dbReference type="Gene3D" id="1.20.1090.10">
    <property type="entry name" value="Dehydroquinate synthase-like - alpha domain"/>
    <property type="match status" value="1"/>
</dbReference>
<dbReference type="HAMAP" id="MF_00497_A">
    <property type="entry name" value="G1P_dehydrogenase_A"/>
    <property type="match status" value="1"/>
</dbReference>
<dbReference type="InterPro" id="IPR023002">
    <property type="entry name" value="G1P_dehydrogenase_arc"/>
</dbReference>
<dbReference type="InterPro" id="IPR032837">
    <property type="entry name" value="G1PDH"/>
</dbReference>
<dbReference type="InterPro" id="IPR016205">
    <property type="entry name" value="Glycerol_DH"/>
</dbReference>
<dbReference type="NCBIfam" id="NF002022">
    <property type="entry name" value="PRK00843.1"/>
    <property type="match status" value="1"/>
</dbReference>
<dbReference type="PANTHER" id="PTHR43616">
    <property type="entry name" value="GLYCEROL DEHYDROGENASE"/>
    <property type="match status" value="1"/>
</dbReference>
<dbReference type="PANTHER" id="PTHR43616:SF5">
    <property type="entry name" value="GLYCEROL DEHYDROGENASE 1"/>
    <property type="match status" value="1"/>
</dbReference>
<dbReference type="Pfam" id="PF13685">
    <property type="entry name" value="Fe-ADH_2"/>
    <property type="match status" value="1"/>
</dbReference>
<dbReference type="PIRSF" id="PIRSF000112">
    <property type="entry name" value="Glycerol_dehydrogenase"/>
    <property type="match status" value="1"/>
</dbReference>
<dbReference type="SUPFAM" id="SSF56796">
    <property type="entry name" value="Dehydroquinate synthase-like"/>
    <property type="match status" value="1"/>
</dbReference>
<reference key="1">
    <citation type="journal article" date="2009" name="BMC Genomics">
        <title>The complete genome sequence of Staphylothermus marinus reveals differences in sulfur metabolism among heterotrophic Crenarchaeota.</title>
        <authorList>
            <person name="Anderson I.J."/>
            <person name="Dharmarajan L."/>
            <person name="Rodriguez J."/>
            <person name="Hooper S."/>
            <person name="Porat I."/>
            <person name="Ulrich L.E."/>
            <person name="Elkins J.G."/>
            <person name="Mavromatis K."/>
            <person name="Sun H."/>
            <person name="Land M."/>
            <person name="Lapidus A."/>
            <person name="Lucas S."/>
            <person name="Barry K."/>
            <person name="Huber H."/>
            <person name="Zhulin I.B."/>
            <person name="Whitman W.B."/>
            <person name="Mukhopadhyay B."/>
            <person name="Woese C."/>
            <person name="Bristow J."/>
            <person name="Kyrpides N."/>
        </authorList>
    </citation>
    <scope>NUCLEOTIDE SEQUENCE [LARGE SCALE GENOMIC DNA]</scope>
    <source>
        <strain>ATCC 43588 / DSM 3639 / JCM 9404 / F1</strain>
    </source>
</reference>
<reference key="2">
    <citation type="journal article" date="2009" name="Stand. Genomic Sci.">
        <title>Complete genome sequence of Staphylothermus marinus Stetter and Fiala 1986 type strain F1.</title>
        <authorList>
            <person name="Anderson I.J."/>
            <person name="Sun H."/>
            <person name="Lapidus A."/>
            <person name="Copeland A."/>
            <person name="Glavina Del Rio T."/>
            <person name="Tice H."/>
            <person name="Dalin E."/>
            <person name="Lucas S."/>
            <person name="Barry K."/>
            <person name="Land M."/>
            <person name="Richardson P."/>
            <person name="Huber H."/>
            <person name="Kyrpides N.C."/>
        </authorList>
    </citation>
    <scope>NUCLEOTIDE SEQUENCE [LARGE SCALE GENOMIC DNA]</scope>
    <source>
        <strain>ATCC 43588 / DSM 3639 / JCM 9404 / F1</strain>
    </source>
</reference>
<comment type="function">
    <text evidence="1">Catalyzes the NAD(P)H-dependent reduction of dihydroxyacetonephosphate (DHAP or glycerone phosphate) to glycerol 1-phosphate (G1P). The G1P thus generated is used as the glycerophosphate backbone of phospholipids in the cellular membranes of Archaea.</text>
</comment>
<comment type="catalytic activity">
    <reaction evidence="1">
        <text>sn-glycerol 1-phosphate + NAD(+) = dihydroxyacetone phosphate + NADH + H(+)</text>
        <dbReference type="Rhea" id="RHEA:21412"/>
        <dbReference type="ChEBI" id="CHEBI:15378"/>
        <dbReference type="ChEBI" id="CHEBI:57540"/>
        <dbReference type="ChEBI" id="CHEBI:57642"/>
        <dbReference type="ChEBI" id="CHEBI:57685"/>
        <dbReference type="ChEBI" id="CHEBI:57945"/>
        <dbReference type="EC" id="1.1.1.261"/>
    </reaction>
</comment>
<comment type="catalytic activity">
    <reaction evidence="1">
        <text>sn-glycerol 1-phosphate + NADP(+) = dihydroxyacetone phosphate + NADPH + H(+)</text>
        <dbReference type="Rhea" id="RHEA:21416"/>
        <dbReference type="ChEBI" id="CHEBI:15378"/>
        <dbReference type="ChEBI" id="CHEBI:57642"/>
        <dbReference type="ChEBI" id="CHEBI:57685"/>
        <dbReference type="ChEBI" id="CHEBI:57783"/>
        <dbReference type="ChEBI" id="CHEBI:58349"/>
        <dbReference type="EC" id="1.1.1.261"/>
    </reaction>
</comment>
<comment type="cofactor">
    <cofactor evidence="1">
        <name>Zn(2+)</name>
        <dbReference type="ChEBI" id="CHEBI:29105"/>
    </cofactor>
    <text evidence="1">Binds 1 zinc ion per subunit.</text>
</comment>
<comment type="pathway">
    <text evidence="1">Membrane lipid metabolism; glycerophospholipid metabolism.</text>
</comment>
<comment type="subunit">
    <text evidence="1">Homodimer.</text>
</comment>
<comment type="subcellular location">
    <subcellularLocation>
        <location evidence="1">Cytoplasm</location>
    </subcellularLocation>
</comment>
<comment type="similarity">
    <text evidence="1">Belongs to the glycerol-1-phosphate dehydrogenase family.</text>
</comment>